<protein>
    <recommendedName>
        <fullName evidence="1">Fructose-1,6-bisphosphatase class 1</fullName>
        <shortName evidence="1">FBPase class 1</shortName>
        <ecNumber evidence="1">3.1.3.11</ecNumber>
    </recommendedName>
    <alternativeName>
        <fullName evidence="1">D-fructose-1,6-bisphosphate 1-phosphohydrolase class 1</fullName>
    </alternativeName>
</protein>
<gene>
    <name evidence="1" type="primary">fbp</name>
    <name type="ordered locus">PputGB1_5090</name>
</gene>
<reference key="1">
    <citation type="submission" date="2008-01" db="EMBL/GenBank/DDBJ databases">
        <title>Complete sequence of Pseudomonas putida GB-1.</title>
        <authorList>
            <consortium name="US DOE Joint Genome Institute"/>
            <person name="Copeland A."/>
            <person name="Lucas S."/>
            <person name="Lapidus A."/>
            <person name="Barry K."/>
            <person name="Glavina del Rio T."/>
            <person name="Dalin E."/>
            <person name="Tice H."/>
            <person name="Pitluck S."/>
            <person name="Bruce D."/>
            <person name="Goodwin L."/>
            <person name="Chertkov O."/>
            <person name="Brettin T."/>
            <person name="Detter J.C."/>
            <person name="Han C."/>
            <person name="Kuske C.R."/>
            <person name="Schmutz J."/>
            <person name="Larimer F."/>
            <person name="Land M."/>
            <person name="Hauser L."/>
            <person name="Kyrpides N."/>
            <person name="Kim E."/>
            <person name="McCarthy J.K."/>
            <person name="Richardson P."/>
        </authorList>
    </citation>
    <scope>NUCLEOTIDE SEQUENCE [LARGE SCALE GENOMIC DNA]</scope>
    <source>
        <strain>GB-1</strain>
    </source>
</reference>
<name>F16PA_PSEPG</name>
<keyword id="KW-0119">Carbohydrate metabolism</keyword>
<keyword id="KW-0963">Cytoplasm</keyword>
<keyword id="KW-0378">Hydrolase</keyword>
<keyword id="KW-0460">Magnesium</keyword>
<keyword id="KW-0479">Metal-binding</keyword>
<proteinExistence type="inferred from homology"/>
<sequence>MSRVTLSRYLIEQTRSNNTPADLRFLIEVVARACKEISHHVSKGALGGVLGSMGTENVQGEVQKKLDVISNDILLEANEWGGHLAGMASEEMDNAYQIPGKYPKGAYLLVFDPLDGSSNIDVNVSVGTIFSVLRCPNQYLSQNESLNEEAFLQPGTEQVAAGYAIYGPQTMLILTLGNGVKGFTLDRELGSFVLTHENIQVPATTAEFAINMSNQRHWEAPVQRYVGELLAGETGPLKKNYNMRWIASMVADVHRILTRGGLFMYPRDAREPSKPGKLRLMYEANPMSFIIEQAGGASTNGYDRILDIKPESLHQRVSVILGSKEEVERVTAYHKE</sequence>
<comment type="catalytic activity">
    <reaction evidence="1">
        <text>beta-D-fructose 1,6-bisphosphate + H2O = beta-D-fructose 6-phosphate + phosphate</text>
        <dbReference type="Rhea" id="RHEA:11064"/>
        <dbReference type="ChEBI" id="CHEBI:15377"/>
        <dbReference type="ChEBI" id="CHEBI:32966"/>
        <dbReference type="ChEBI" id="CHEBI:43474"/>
        <dbReference type="ChEBI" id="CHEBI:57634"/>
        <dbReference type="EC" id="3.1.3.11"/>
    </reaction>
</comment>
<comment type="cofactor">
    <cofactor evidence="1">
        <name>Mg(2+)</name>
        <dbReference type="ChEBI" id="CHEBI:18420"/>
    </cofactor>
    <text evidence="1">Binds 2 magnesium ions per subunit.</text>
</comment>
<comment type="pathway">
    <text evidence="1">Carbohydrate biosynthesis; gluconeogenesis.</text>
</comment>
<comment type="subunit">
    <text evidence="1">Homotetramer.</text>
</comment>
<comment type="subcellular location">
    <subcellularLocation>
        <location evidence="1">Cytoplasm</location>
    </subcellularLocation>
</comment>
<comment type="similarity">
    <text evidence="1">Belongs to the FBPase class 1 family.</text>
</comment>
<dbReference type="EC" id="3.1.3.11" evidence="1"/>
<dbReference type="EMBL" id="CP000926">
    <property type="protein sequence ID" value="ABZ00975.1"/>
    <property type="molecule type" value="Genomic_DNA"/>
</dbReference>
<dbReference type="RefSeq" id="WP_012274595.1">
    <property type="nucleotide sequence ID" value="NC_010322.1"/>
</dbReference>
<dbReference type="SMR" id="B0KM65"/>
<dbReference type="KEGG" id="ppg:PputGB1_5090"/>
<dbReference type="eggNOG" id="COG0158">
    <property type="taxonomic scope" value="Bacteria"/>
</dbReference>
<dbReference type="HOGENOM" id="CLU_039977_0_0_6"/>
<dbReference type="UniPathway" id="UPA00138"/>
<dbReference type="Proteomes" id="UP000002157">
    <property type="component" value="Chromosome"/>
</dbReference>
<dbReference type="GO" id="GO:0005829">
    <property type="term" value="C:cytosol"/>
    <property type="evidence" value="ECO:0007669"/>
    <property type="project" value="TreeGrafter"/>
</dbReference>
<dbReference type="GO" id="GO:0042132">
    <property type="term" value="F:fructose 1,6-bisphosphate 1-phosphatase activity"/>
    <property type="evidence" value="ECO:0007669"/>
    <property type="project" value="UniProtKB-UniRule"/>
</dbReference>
<dbReference type="GO" id="GO:0000287">
    <property type="term" value="F:magnesium ion binding"/>
    <property type="evidence" value="ECO:0007669"/>
    <property type="project" value="UniProtKB-UniRule"/>
</dbReference>
<dbReference type="GO" id="GO:0030388">
    <property type="term" value="P:fructose 1,6-bisphosphate metabolic process"/>
    <property type="evidence" value="ECO:0007669"/>
    <property type="project" value="TreeGrafter"/>
</dbReference>
<dbReference type="GO" id="GO:0006002">
    <property type="term" value="P:fructose 6-phosphate metabolic process"/>
    <property type="evidence" value="ECO:0007669"/>
    <property type="project" value="TreeGrafter"/>
</dbReference>
<dbReference type="GO" id="GO:0006000">
    <property type="term" value="P:fructose metabolic process"/>
    <property type="evidence" value="ECO:0007669"/>
    <property type="project" value="TreeGrafter"/>
</dbReference>
<dbReference type="GO" id="GO:0006094">
    <property type="term" value="P:gluconeogenesis"/>
    <property type="evidence" value="ECO:0007669"/>
    <property type="project" value="UniProtKB-UniRule"/>
</dbReference>
<dbReference type="GO" id="GO:0005986">
    <property type="term" value="P:sucrose biosynthetic process"/>
    <property type="evidence" value="ECO:0007669"/>
    <property type="project" value="TreeGrafter"/>
</dbReference>
<dbReference type="CDD" id="cd00354">
    <property type="entry name" value="FBPase"/>
    <property type="match status" value="1"/>
</dbReference>
<dbReference type="FunFam" id="3.30.540.10:FF:000006">
    <property type="entry name" value="Fructose-1,6-bisphosphatase class 1"/>
    <property type="match status" value="1"/>
</dbReference>
<dbReference type="FunFam" id="3.40.190.80:FF:000011">
    <property type="entry name" value="Fructose-1,6-bisphosphatase class 1"/>
    <property type="match status" value="1"/>
</dbReference>
<dbReference type="Gene3D" id="3.40.190.80">
    <property type="match status" value="1"/>
</dbReference>
<dbReference type="Gene3D" id="3.30.540.10">
    <property type="entry name" value="Fructose-1,6-Bisphosphatase, subunit A, domain 1"/>
    <property type="match status" value="1"/>
</dbReference>
<dbReference type="HAMAP" id="MF_01855">
    <property type="entry name" value="FBPase_class1"/>
    <property type="match status" value="1"/>
</dbReference>
<dbReference type="InterPro" id="IPR044015">
    <property type="entry name" value="FBPase_C_dom"/>
</dbReference>
<dbReference type="InterPro" id="IPR000146">
    <property type="entry name" value="FBPase_class-1"/>
</dbReference>
<dbReference type="InterPro" id="IPR033391">
    <property type="entry name" value="FBPase_N"/>
</dbReference>
<dbReference type="InterPro" id="IPR028343">
    <property type="entry name" value="FBPtase"/>
</dbReference>
<dbReference type="NCBIfam" id="NF006778">
    <property type="entry name" value="PRK09293.1-1"/>
    <property type="match status" value="1"/>
</dbReference>
<dbReference type="NCBIfam" id="NF006779">
    <property type="entry name" value="PRK09293.1-3"/>
    <property type="match status" value="1"/>
</dbReference>
<dbReference type="NCBIfam" id="NF006780">
    <property type="entry name" value="PRK09293.1-4"/>
    <property type="match status" value="1"/>
</dbReference>
<dbReference type="PANTHER" id="PTHR11556">
    <property type="entry name" value="FRUCTOSE-1,6-BISPHOSPHATASE-RELATED"/>
    <property type="match status" value="1"/>
</dbReference>
<dbReference type="PANTHER" id="PTHR11556:SF35">
    <property type="entry name" value="SEDOHEPTULOSE-1,7-BISPHOSPHATASE, CHLOROPLASTIC"/>
    <property type="match status" value="1"/>
</dbReference>
<dbReference type="Pfam" id="PF00316">
    <property type="entry name" value="FBPase"/>
    <property type="match status" value="1"/>
</dbReference>
<dbReference type="Pfam" id="PF18913">
    <property type="entry name" value="FBPase_C"/>
    <property type="match status" value="1"/>
</dbReference>
<dbReference type="PIRSF" id="PIRSF500210">
    <property type="entry name" value="FBPtase"/>
    <property type="match status" value="1"/>
</dbReference>
<dbReference type="PIRSF" id="PIRSF000904">
    <property type="entry name" value="FBPtase_SBPase"/>
    <property type="match status" value="1"/>
</dbReference>
<dbReference type="PRINTS" id="PR00115">
    <property type="entry name" value="F16BPHPHTASE"/>
</dbReference>
<dbReference type="SUPFAM" id="SSF56655">
    <property type="entry name" value="Carbohydrate phosphatase"/>
    <property type="match status" value="1"/>
</dbReference>
<organism>
    <name type="scientific">Pseudomonas putida (strain GB-1)</name>
    <dbReference type="NCBI Taxonomy" id="76869"/>
    <lineage>
        <taxon>Bacteria</taxon>
        <taxon>Pseudomonadati</taxon>
        <taxon>Pseudomonadota</taxon>
        <taxon>Gammaproteobacteria</taxon>
        <taxon>Pseudomonadales</taxon>
        <taxon>Pseudomonadaceae</taxon>
        <taxon>Pseudomonas</taxon>
    </lineage>
</organism>
<evidence type="ECO:0000255" key="1">
    <source>
        <dbReference type="HAMAP-Rule" id="MF_01855"/>
    </source>
</evidence>
<feature type="chain" id="PRO_0000364649" description="Fructose-1,6-bisphosphatase class 1">
    <location>
        <begin position="1"/>
        <end position="336"/>
    </location>
</feature>
<feature type="binding site" evidence="1">
    <location>
        <position position="90"/>
    </location>
    <ligand>
        <name>Mg(2+)</name>
        <dbReference type="ChEBI" id="CHEBI:18420"/>
        <label>1</label>
    </ligand>
</feature>
<feature type="binding site" evidence="1">
    <location>
        <position position="112"/>
    </location>
    <ligand>
        <name>Mg(2+)</name>
        <dbReference type="ChEBI" id="CHEBI:18420"/>
        <label>1</label>
    </ligand>
</feature>
<feature type="binding site" evidence="1">
    <location>
        <position position="112"/>
    </location>
    <ligand>
        <name>Mg(2+)</name>
        <dbReference type="ChEBI" id="CHEBI:18420"/>
        <label>2</label>
    </ligand>
</feature>
<feature type="binding site" evidence="1">
    <location>
        <position position="114"/>
    </location>
    <ligand>
        <name>Mg(2+)</name>
        <dbReference type="ChEBI" id="CHEBI:18420"/>
        <label>1</label>
    </ligand>
</feature>
<feature type="binding site" evidence="1">
    <location>
        <begin position="115"/>
        <end position="118"/>
    </location>
    <ligand>
        <name>substrate</name>
    </ligand>
</feature>
<feature type="binding site" evidence="1">
    <location>
        <position position="115"/>
    </location>
    <ligand>
        <name>Mg(2+)</name>
        <dbReference type="ChEBI" id="CHEBI:18420"/>
        <label>2</label>
    </ligand>
</feature>
<feature type="binding site" evidence="1">
    <location>
        <position position="211"/>
    </location>
    <ligand>
        <name>substrate</name>
    </ligand>
</feature>
<feature type="binding site" evidence="1">
    <location>
        <position position="277"/>
    </location>
    <ligand>
        <name>substrate</name>
    </ligand>
</feature>
<feature type="binding site" evidence="1">
    <location>
        <position position="283"/>
    </location>
    <ligand>
        <name>Mg(2+)</name>
        <dbReference type="ChEBI" id="CHEBI:18420"/>
        <label>2</label>
    </ligand>
</feature>
<accession>B0KM65</accession>